<name>ACYP_NITV4</name>
<evidence type="ECO:0000255" key="1">
    <source>
        <dbReference type="PROSITE-ProRule" id="PRU00520"/>
    </source>
</evidence>
<evidence type="ECO:0000256" key="2">
    <source>
        <dbReference type="SAM" id="MobiDB-lite"/>
    </source>
</evidence>
<evidence type="ECO:0000305" key="3"/>
<dbReference type="EC" id="3.6.1.7"/>
<dbReference type="EMBL" id="CP000527">
    <property type="protein sequence ID" value="ABM28882.1"/>
    <property type="molecule type" value="Genomic_DNA"/>
</dbReference>
<dbReference type="RefSeq" id="WP_010938488.1">
    <property type="nucleotide sequence ID" value="NC_008751.1"/>
</dbReference>
<dbReference type="SMR" id="A1VEL6"/>
<dbReference type="KEGG" id="dvl:Dvul_1865"/>
<dbReference type="HOGENOM" id="CLU_141932_3_2_7"/>
<dbReference type="Proteomes" id="UP000009173">
    <property type="component" value="Chromosome"/>
</dbReference>
<dbReference type="GO" id="GO:0003998">
    <property type="term" value="F:acylphosphatase activity"/>
    <property type="evidence" value="ECO:0007669"/>
    <property type="project" value="UniProtKB-EC"/>
</dbReference>
<dbReference type="Gene3D" id="3.30.70.100">
    <property type="match status" value="1"/>
</dbReference>
<dbReference type="InterPro" id="IPR020456">
    <property type="entry name" value="Acylphosphatase"/>
</dbReference>
<dbReference type="InterPro" id="IPR001792">
    <property type="entry name" value="Acylphosphatase-like_dom"/>
</dbReference>
<dbReference type="InterPro" id="IPR036046">
    <property type="entry name" value="Acylphosphatase-like_dom_sf"/>
</dbReference>
<dbReference type="InterPro" id="IPR017968">
    <property type="entry name" value="Acylphosphatase_CS"/>
</dbReference>
<dbReference type="PANTHER" id="PTHR47268">
    <property type="entry name" value="ACYLPHOSPHATASE"/>
    <property type="match status" value="1"/>
</dbReference>
<dbReference type="PANTHER" id="PTHR47268:SF4">
    <property type="entry name" value="ACYLPHOSPHATASE"/>
    <property type="match status" value="1"/>
</dbReference>
<dbReference type="Pfam" id="PF00708">
    <property type="entry name" value="Acylphosphatase"/>
    <property type="match status" value="1"/>
</dbReference>
<dbReference type="PRINTS" id="PR00112">
    <property type="entry name" value="ACYLPHPHTASE"/>
</dbReference>
<dbReference type="SUPFAM" id="SSF54975">
    <property type="entry name" value="Acylphosphatase/BLUF domain-like"/>
    <property type="match status" value="1"/>
</dbReference>
<dbReference type="PROSITE" id="PS00150">
    <property type="entry name" value="ACYLPHOSPHATASE_1"/>
    <property type="match status" value="1"/>
</dbReference>
<dbReference type="PROSITE" id="PS00151">
    <property type="entry name" value="ACYLPHOSPHATASE_2"/>
    <property type="match status" value="1"/>
</dbReference>
<dbReference type="PROSITE" id="PS51160">
    <property type="entry name" value="ACYLPHOSPHATASE_3"/>
    <property type="match status" value="1"/>
</dbReference>
<proteinExistence type="inferred from homology"/>
<keyword id="KW-0378">Hydrolase</keyword>
<sequence length="100" mass="11203">MPRRSYSVIGRVQGVGFRSWTRRTALRLDLRGWVRNEPDGTVRLCADGTDEALATLETALRKGPMFSRVDHVVKHDDPAHEGPLPDTFDIRFRAPGSASE</sequence>
<comment type="catalytic activity">
    <reaction>
        <text>an acyl phosphate + H2O = a carboxylate + phosphate + H(+)</text>
        <dbReference type="Rhea" id="RHEA:14965"/>
        <dbReference type="ChEBI" id="CHEBI:15377"/>
        <dbReference type="ChEBI" id="CHEBI:15378"/>
        <dbReference type="ChEBI" id="CHEBI:29067"/>
        <dbReference type="ChEBI" id="CHEBI:43474"/>
        <dbReference type="ChEBI" id="CHEBI:59918"/>
        <dbReference type="EC" id="3.6.1.7"/>
    </reaction>
</comment>
<comment type="similarity">
    <text evidence="3">Belongs to the acylphosphatase family.</text>
</comment>
<organism>
    <name type="scientific">Nitratidesulfovibrio vulgaris (strain DP4)</name>
    <name type="common">Desulfovibrio vulgaris</name>
    <dbReference type="NCBI Taxonomy" id="391774"/>
    <lineage>
        <taxon>Bacteria</taxon>
        <taxon>Pseudomonadati</taxon>
        <taxon>Thermodesulfobacteriota</taxon>
        <taxon>Desulfovibrionia</taxon>
        <taxon>Desulfovibrionales</taxon>
        <taxon>Desulfovibrionaceae</taxon>
        <taxon>Nitratidesulfovibrio</taxon>
    </lineage>
</organism>
<accession>A1VEL6</accession>
<reference key="1">
    <citation type="journal article" date="2009" name="Environ. Microbiol.">
        <title>Contribution of mobile genetic elements to Desulfovibrio vulgaris genome plasticity.</title>
        <authorList>
            <person name="Walker C.B."/>
            <person name="Stolyar S."/>
            <person name="Chivian D."/>
            <person name="Pinel N."/>
            <person name="Gabster J.A."/>
            <person name="Dehal P.S."/>
            <person name="He Z."/>
            <person name="Yang Z.K."/>
            <person name="Yen H.C."/>
            <person name="Zhou J."/>
            <person name="Wall J.D."/>
            <person name="Hazen T.C."/>
            <person name="Arkin A.P."/>
            <person name="Stahl D.A."/>
        </authorList>
    </citation>
    <scope>NUCLEOTIDE SEQUENCE [LARGE SCALE GENOMIC DNA]</scope>
    <source>
        <strain>DP4</strain>
    </source>
</reference>
<feature type="chain" id="PRO_0000326703" description="Acylphosphatase">
    <location>
        <begin position="1"/>
        <end position="100"/>
    </location>
</feature>
<feature type="domain" description="Acylphosphatase-like" evidence="1">
    <location>
        <begin position="3"/>
        <end position="92"/>
    </location>
</feature>
<feature type="region of interest" description="Disordered" evidence="2">
    <location>
        <begin position="76"/>
        <end position="100"/>
    </location>
</feature>
<feature type="active site" evidence="1">
    <location>
        <position position="18"/>
    </location>
</feature>
<feature type="active site" evidence="1">
    <location>
        <position position="36"/>
    </location>
</feature>
<protein>
    <recommendedName>
        <fullName>Acylphosphatase</fullName>
        <ecNumber>3.6.1.7</ecNumber>
    </recommendedName>
    <alternativeName>
        <fullName>Acylphosphate phosphohydrolase</fullName>
    </alternativeName>
</protein>
<gene>
    <name type="primary">acyP</name>
    <name type="ordered locus">Dvul_1865</name>
</gene>